<dbReference type="EC" id="4.2.1.59" evidence="1"/>
<dbReference type="EMBL" id="CP000628">
    <property type="protein sequence ID" value="ACM26470.1"/>
    <property type="molecule type" value="Genomic_DNA"/>
</dbReference>
<dbReference type="RefSeq" id="WP_007693429.1">
    <property type="nucleotide sequence ID" value="NC_011985.1"/>
</dbReference>
<dbReference type="SMR" id="B9JEX9"/>
<dbReference type="STRING" id="311403.Arad_2231"/>
<dbReference type="GeneID" id="86848363"/>
<dbReference type="KEGG" id="ara:Arad_2231"/>
<dbReference type="eggNOG" id="COG0764">
    <property type="taxonomic scope" value="Bacteria"/>
</dbReference>
<dbReference type="HOGENOM" id="CLU_078912_1_2_5"/>
<dbReference type="Proteomes" id="UP000001600">
    <property type="component" value="Chromosome 1"/>
</dbReference>
<dbReference type="GO" id="GO:0005737">
    <property type="term" value="C:cytoplasm"/>
    <property type="evidence" value="ECO:0007669"/>
    <property type="project" value="UniProtKB-SubCell"/>
</dbReference>
<dbReference type="GO" id="GO:0016020">
    <property type="term" value="C:membrane"/>
    <property type="evidence" value="ECO:0007669"/>
    <property type="project" value="GOC"/>
</dbReference>
<dbReference type="GO" id="GO:0019171">
    <property type="term" value="F:(3R)-hydroxyacyl-[acyl-carrier-protein] dehydratase activity"/>
    <property type="evidence" value="ECO:0007669"/>
    <property type="project" value="UniProtKB-EC"/>
</dbReference>
<dbReference type="GO" id="GO:0006633">
    <property type="term" value="P:fatty acid biosynthetic process"/>
    <property type="evidence" value="ECO:0007669"/>
    <property type="project" value="UniProtKB-UniRule"/>
</dbReference>
<dbReference type="GO" id="GO:0009245">
    <property type="term" value="P:lipid A biosynthetic process"/>
    <property type="evidence" value="ECO:0007669"/>
    <property type="project" value="UniProtKB-UniRule"/>
</dbReference>
<dbReference type="CDD" id="cd01288">
    <property type="entry name" value="FabZ"/>
    <property type="match status" value="1"/>
</dbReference>
<dbReference type="FunFam" id="3.10.129.10:FF:000001">
    <property type="entry name" value="3-hydroxyacyl-[acyl-carrier-protein] dehydratase FabZ"/>
    <property type="match status" value="1"/>
</dbReference>
<dbReference type="Gene3D" id="3.10.129.10">
    <property type="entry name" value="Hotdog Thioesterase"/>
    <property type="match status" value="1"/>
</dbReference>
<dbReference type="HAMAP" id="MF_00406">
    <property type="entry name" value="FabZ"/>
    <property type="match status" value="1"/>
</dbReference>
<dbReference type="InterPro" id="IPR013114">
    <property type="entry name" value="FabA_FabZ"/>
</dbReference>
<dbReference type="InterPro" id="IPR010084">
    <property type="entry name" value="FabZ"/>
</dbReference>
<dbReference type="InterPro" id="IPR029069">
    <property type="entry name" value="HotDog_dom_sf"/>
</dbReference>
<dbReference type="NCBIfam" id="TIGR01750">
    <property type="entry name" value="fabZ"/>
    <property type="match status" value="1"/>
</dbReference>
<dbReference type="NCBIfam" id="NF000582">
    <property type="entry name" value="PRK00006.1"/>
    <property type="match status" value="1"/>
</dbReference>
<dbReference type="PANTHER" id="PTHR30272">
    <property type="entry name" value="3-HYDROXYACYL-[ACYL-CARRIER-PROTEIN] DEHYDRATASE"/>
    <property type="match status" value="1"/>
</dbReference>
<dbReference type="PANTHER" id="PTHR30272:SF1">
    <property type="entry name" value="3-HYDROXYACYL-[ACYL-CARRIER-PROTEIN] DEHYDRATASE"/>
    <property type="match status" value="1"/>
</dbReference>
<dbReference type="Pfam" id="PF07977">
    <property type="entry name" value="FabA"/>
    <property type="match status" value="1"/>
</dbReference>
<dbReference type="SUPFAM" id="SSF54637">
    <property type="entry name" value="Thioesterase/thiol ester dehydrase-isomerase"/>
    <property type="match status" value="1"/>
</dbReference>
<comment type="function">
    <text evidence="1">Involved in unsaturated fatty acids biosynthesis. Catalyzes the dehydration of short chain beta-hydroxyacyl-ACPs and long chain saturated and unsaturated beta-hydroxyacyl-ACPs.</text>
</comment>
<comment type="catalytic activity">
    <reaction evidence="1">
        <text>a (3R)-hydroxyacyl-[ACP] = a (2E)-enoyl-[ACP] + H2O</text>
        <dbReference type="Rhea" id="RHEA:13097"/>
        <dbReference type="Rhea" id="RHEA-COMP:9925"/>
        <dbReference type="Rhea" id="RHEA-COMP:9945"/>
        <dbReference type="ChEBI" id="CHEBI:15377"/>
        <dbReference type="ChEBI" id="CHEBI:78784"/>
        <dbReference type="ChEBI" id="CHEBI:78827"/>
        <dbReference type="EC" id="4.2.1.59"/>
    </reaction>
</comment>
<comment type="subcellular location">
    <subcellularLocation>
        <location evidence="1">Cytoplasm</location>
    </subcellularLocation>
</comment>
<comment type="similarity">
    <text evidence="1">Belongs to the thioester dehydratase family. FabZ subfamily.</text>
</comment>
<sequence length="157" mass="17196">MTEDAKTSLSSADIIEIMKLLPHRYPFLMVDRIIEIDSDNSAIGIKNVTANEPQFTGHFPGSPIMPGVLLIEGMAQTAGAICARKDGIGGNLVYFMTIDNARFRKPVVPGDRVEFHVVKQKQRGTIWKFHCDAKVDGSVVAEADIGAMIVRKDPDQA</sequence>
<feature type="chain" id="PRO_1000134680" description="3-hydroxyacyl-[acyl-carrier-protein] dehydratase FabZ">
    <location>
        <begin position="1"/>
        <end position="157"/>
    </location>
</feature>
<feature type="active site" evidence="1">
    <location>
        <position position="58"/>
    </location>
</feature>
<keyword id="KW-0963">Cytoplasm</keyword>
<keyword id="KW-0441">Lipid A biosynthesis</keyword>
<keyword id="KW-0444">Lipid biosynthesis</keyword>
<keyword id="KW-0443">Lipid metabolism</keyword>
<keyword id="KW-0456">Lyase</keyword>
<accession>B9JEX9</accession>
<proteinExistence type="inferred from homology"/>
<protein>
    <recommendedName>
        <fullName evidence="1">3-hydroxyacyl-[acyl-carrier-protein] dehydratase FabZ</fullName>
        <ecNumber evidence="1">4.2.1.59</ecNumber>
    </recommendedName>
    <alternativeName>
        <fullName evidence="1">(3R)-hydroxymyristoyl-[acyl-carrier-protein] dehydratase</fullName>
        <shortName evidence="1">(3R)-hydroxymyristoyl-ACP dehydrase</shortName>
    </alternativeName>
    <alternativeName>
        <fullName evidence="1">Beta-hydroxyacyl-ACP dehydratase</fullName>
    </alternativeName>
</protein>
<gene>
    <name evidence="1" type="primary">fabZ</name>
    <name type="ordered locus">Arad_2231</name>
</gene>
<organism>
    <name type="scientific">Rhizobium rhizogenes (strain K84 / ATCC BAA-868)</name>
    <name type="common">Agrobacterium radiobacter</name>
    <dbReference type="NCBI Taxonomy" id="311403"/>
    <lineage>
        <taxon>Bacteria</taxon>
        <taxon>Pseudomonadati</taxon>
        <taxon>Pseudomonadota</taxon>
        <taxon>Alphaproteobacteria</taxon>
        <taxon>Hyphomicrobiales</taxon>
        <taxon>Rhizobiaceae</taxon>
        <taxon>Rhizobium/Agrobacterium group</taxon>
        <taxon>Rhizobium</taxon>
    </lineage>
</organism>
<evidence type="ECO:0000255" key="1">
    <source>
        <dbReference type="HAMAP-Rule" id="MF_00406"/>
    </source>
</evidence>
<reference key="1">
    <citation type="journal article" date="2009" name="J. Bacteriol.">
        <title>Genome sequences of three Agrobacterium biovars help elucidate the evolution of multichromosome genomes in bacteria.</title>
        <authorList>
            <person name="Slater S.C."/>
            <person name="Goldman B.S."/>
            <person name="Goodner B."/>
            <person name="Setubal J.C."/>
            <person name="Farrand S.K."/>
            <person name="Nester E.W."/>
            <person name="Burr T.J."/>
            <person name="Banta L."/>
            <person name="Dickerman A.W."/>
            <person name="Paulsen I."/>
            <person name="Otten L."/>
            <person name="Suen G."/>
            <person name="Welch R."/>
            <person name="Almeida N.F."/>
            <person name="Arnold F."/>
            <person name="Burton O.T."/>
            <person name="Du Z."/>
            <person name="Ewing A."/>
            <person name="Godsy E."/>
            <person name="Heisel S."/>
            <person name="Houmiel K.L."/>
            <person name="Jhaveri J."/>
            <person name="Lu J."/>
            <person name="Miller N.M."/>
            <person name="Norton S."/>
            <person name="Chen Q."/>
            <person name="Phoolcharoen W."/>
            <person name="Ohlin V."/>
            <person name="Ondrusek D."/>
            <person name="Pride N."/>
            <person name="Stricklin S.L."/>
            <person name="Sun J."/>
            <person name="Wheeler C."/>
            <person name="Wilson L."/>
            <person name="Zhu H."/>
            <person name="Wood D.W."/>
        </authorList>
    </citation>
    <scope>NUCLEOTIDE SEQUENCE [LARGE SCALE GENOMIC DNA]</scope>
    <source>
        <strain>K84 / ATCC BAA-868</strain>
    </source>
</reference>
<name>FABZ_RHIR8</name>